<proteinExistence type="inferred from homology"/>
<organism>
    <name type="scientific">Acholeplasma laidlawii (strain PG-8A)</name>
    <dbReference type="NCBI Taxonomy" id="441768"/>
    <lineage>
        <taxon>Bacteria</taxon>
        <taxon>Bacillati</taxon>
        <taxon>Mycoplasmatota</taxon>
        <taxon>Mollicutes</taxon>
        <taxon>Acholeplasmatales</taxon>
        <taxon>Acholeplasmataceae</taxon>
        <taxon>Acholeplasma</taxon>
    </lineage>
</organism>
<protein>
    <recommendedName>
        <fullName evidence="1">Large ribosomal subunit protein uL4</fullName>
    </recommendedName>
    <alternativeName>
        <fullName evidence="3">50S ribosomal protein L4</fullName>
    </alternativeName>
</protein>
<reference key="1">
    <citation type="journal article" date="2011" name="J. Bacteriol.">
        <title>Complete genome and proteome of Acholeplasma laidlawii.</title>
        <authorList>
            <person name="Lazarev V.N."/>
            <person name="Levitskii S.A."/>
            <person name="Basovskii Y.I."/>
            <person name="Chukin M.M."/>
            <person name="Akopian T.A."/>
            <person name="Vereshchagin V.V."/>
            <person name="Kostrjukova E.S."/>
            <person name="Kovaleva G.Y."/>
            <person name="Kazanov M.D."/>
            <person name="Malko D.B."/>
            <person name="Vitreschak A.G."/>
            <person name="Sernova N.V."/>
            <person name="Gelfand M.S."/>
            <person name="Demina I.A."/>
            <person name="Serebryakova M.V."/>
            <person name="Galyamina M.A."/>
            <person name="Vtyurin N.N."/>
            <person name="Rogov S.I."/>
            <person name="Alexeev D.G."/>
            <person name="Ladygina V.G."/>
            <person name="Govorun V.M."/>
        </authorList>
    </citation>
    <scope>NUCLEOTIDE SEQUENCE [LARGE SCALE GENOMIC DNA]</scope>
    <source>
        <strain>PG-8A</strain>
    </source>
</reference>
<keyword id="KW-1185">Reference proteome</keyword>
<keyword id="KW-0687">Ribonucleoprotein</keyword>
<keyword id="KW-0689">Ribosomal protein</keyword>
<keyword id="KW-0694">RNA-binding</keyword>
<keyword id="KW-0699">rRNA-binding</keyword>
<name>RL4_ACHLI</name>
<accession>A9NED4</accession>
<comment type="function">
    <text evidence="1">One of the primary rRNA binding proteins, this protein initially binds near the 5'-end of the 23S rRNA. It is important during the early stages of 50S assembly. It makes multiple contacts with different domains of the 23S rRNA in the assembled 50S subunit and ribosome.</text>
</comment>
<comment type="function">
    <text evidence="1">Forms part of the polypeptide exit tunnel.</text>
</comment>
<comment type="subunit">
    <text evidence="1">Part of the 50S ribosomal subunit.</text>
</comment>
<comment type="similarity">
    <text evidence="1">Belongs to the universal ribosomal protein uL4 family.</text>
</comment>
<dbReference type="EMBL" id="CP000896">
    <property type="protein sequence ID" value="ABX80714.1"/>
    <property type="molecule type" value="Genomic_DNA"/>
</dbReference>
<dbReference type="RefSeq" id="WP_012242045.1">
    <property type="nucleotide sequence ID" value="NC_010163.1"/>
</dbReference>
<dbReference type="SMR" id="A9NED4"/>
<dbReference type="STRING" id="441768.ACL_0088"/>
<dbReference type="GeneID" id="41338290"/>
<dbReference type="KEGG" id="acl:ACL_0088"/>
<dbReference type="eggNOG" id="COG0088">
    <property type="taxonomic scope" value="Bacteria"/>
</dbReference>
<dbReference type="HOGENOM" id="CLU_041575_5_2_14"/>
<dbReference type="OrthoDB" id="9803201at2"/>
<dbReference type="Proteomes" id="UP000008558">
    <property type="component" value="Chromosome"/>
</dbReference>
<dbReference type="GO" id="GO:1990904">
    <property type="term" value="C:ribonucleoprotein complex"/>
    <property type="evidence" value="ECO:0007669"/>
    <property type="project" value="UniProtKB-KW"/>
</dbReference>
<dbReference type="GO" id="GO:0005840">
    <property type="term" value="C:ribosome"/>
    <property type="evidence" value="ECO:0007669"/>
    <property type="project" value="UniProtKB-KW"/>
</dbReference>
<dbReference type="GO" id="GO:0019843">
    <property type="term" value="F:rRNA binding"/>
    <property type="evidence" value="ECO:0007669"/>
    <property type="project" value="UniProtKB-UniRule"/>
</dbReference>
<dbReference type="GO" id="GO:0003735">
    <property type="term" value="F:structural constituent of ribosome"/>
    <property type="evidence" value="ECO:0007669"/>
    <property type="project" value="InterPro"/>
</dbReference>
<dbReference type="GO" id="GO:0006412">
    <property type="term" value="P:translation"/>
    <property type="evidence" value="ECO:0007669"/>
    <property type="project" value="UniProtKB-UniRule"/>
</dbReference>
<dbReference type="Gene3D" id="3.40.1370.10">
    <property type="match status" value="1"/>
</dbReference>
<dbReference type="HAMAP" id="MF_01328_B">
    <property type="entry name" value="Ribosomal_uL4_B"/>
    <property type="match status" value="1"/>
</dbReference>
<dbReference type="InterPro" id="IPR002136">
    <property type="entry name" value="Ribosomal_uL4"/>
</dbReference>
<dbReference type="InterPro" id="IPR013005">
    <property type="entry name" value="Ribosomal_uL4-like"/>
</dbReference>
<dbReference type="InterPro" id="IPR023574">
    <property type="entry name" value="Ribosomal_uL4_dom_sf"/>
</dbReference>
<dbReference type="NCBIfam" id="TIGR03953">
    <property type="entry name" value="rplD_bact"/>
    <property type="match status" value="1"/>
</dbReference>
<dbReference type="PANTHER" id="PTHR10746">
    <property type="entry name" value="50S RIBOSOMAL PROTEIN L4"/>
    <property type="match status" value="1"/>
</dbReference>
<dbReference type="PANTHER" id="PTHR10746:SF6">
    <property type="entry name" value="LARGE RIBOSOMAL SUBUNIT PROTEIN UL4M"/>
    <property type="match status" value="1"/>
</dbReference>
<dbReference type="Pfam" id="PF00573">
    <property type="entry name" value="Ribosomal_L4"/>
    <property type="match status" value="1"/>
</dbReference>
<dbReference type="SUPFAM" id="SSF52166">
    <property type="entry name" value="Ribosomal protein L4"/>
    <property type="match status" value="1"/>
</dbReference>
<sequence length="207" mass="22825">MPTLNLFNQAGEKISEVALNDAIFGITPNQQVLYDVVNAQRAALRQGTAKTKTRAEVRGGGKKPWRQKGTGRARQGSIRSPQWRGGGIVFGPIPRSYAVKVNQKVKQLALKSALSYHVLAENLVLVDNITVAEPKTKLFIEIMNNLKLDDRSIVLVDSVDKNLLLASNNLPGAVVREVSQVSVYELLKFKQVVLTQGAVKYYEEVLV</sequence>
<gene>
    <name evidence="1" type="primary">rplD</name>
    <name type="ordered locus">ACL_0088</name>
</gene>
<evidence type="ECO:0000255" key="1">
    <source>
        <dbReference type="HAMAP-Rule" id="MF_01328"/>
    </source>
</evidence>
<evidence type="ECO:0000256" key="2">
    <source>
        <dbReference type="SAM" id="MobiDB-lite"/>
    </source>
</evidence>
<evidence type="ECO:0000305" key="3"/>
<feature type="chain" id="PRO_1000086505" description="Large ribosomal subunit protein uL4">
    <location>
        <begin position="1"/>
        <end position="207"/>
    </location>
</feature>
<feature type="region of interest" description="Disordered" evidence="2">
    <location>
        <begin position="47"/>
        <end position="78"/>
    </location>
</feature>
<feature type="compositionally biased region" description="Basic residues" evidence="2">
    <location>
        <begin position="60"/>
        <end position="71"/>
    </location>
</feature>